<accession>Q06076</accession>
<comment type="function">
    <text evidence="7">The A chain is responsible for inhibiting protein synthesis through the catalytic inactivation of 60S ribosomal subunits by removing adenine from position 4,324 of 28S rRNA.</text>
</comment>
<comment type="function">
    <text evidence="7">The B chain is a galactose-specific lectin that facilitates the binding of abrin to the cell membrane that precedes endocytosis.</text>
</comment>
<comment type="catalytic activity">
    <reaction evidence="5">
        <text>Endohydrolysis of the N-glycosidic bond at one specific adenosine on the 28S rRNA.</text>
        <dbReference type="EC" id="3.2.2.22"/>
    </reaction>
</comment>
<comment type="subunit">
    <text evidence="7">Disulfide-linked dimer of A and B chains.</text>
</comment>
<comment type="domain">
    <text evidence="7">The B chain is composed of two domains, each domain consists of 3 homologous subdomains (alpha, beta, gamma).</text>
</comment>
<comment type="similarity">
    <text evidence="3">In the N-terminal section; belongs to the ribosome-inactivating protein family. Type 2 RIP subfamily.</text>
</comment>
<keyword id="KW-1015">Disulfide bond</keyword>
<keyword id="KW-0325">Glycoprotein</keyword>
<keyword id="KW-0378">Hydrolase</keyword>
<keyword id="KW-0430">Lectin</keyword>
<keyword id="KW-0611">Plant defense</keyword>
<keyword id="KW-0652">Protein synthesis inhibitor</keyword>
<keyword id="KW-0873">Pyrrolidone carboxylic acid</keyword>
<keyword id="KW-1185">Reference proteome</keyword>
<keyword id="KW-0677">Repeat</keyword>
<keyword id="KW-0800">Toxin</keyword>
<name>ABRD_ABRPR</name>
<feature type="chain" id="PRO_0000030738" description="Abrin-d A chain" evidence="2">
    <location>
        <begin position="1"/>
        <end position="251"/>
    </location>
</feature>
<feature type="peptide" id="PRO_0000030739" description="Linker peptide" evidence="2">
    <location>
        <begin position="252"/>
        <end position="261"/>
    </location>
</feature>
<feature type="chain" id="PRO_0000030740" description="Abrin-d B chain" evidence="2">
    <location>
        <begin position="262"/>
        <end position="528"/>
    </location>
</feature>
<feature type="domain" description="Ricin B-type lectin 1" evidence="4">
    <location>
        <begin position="273"/>
        <end position="400"/>
    </location>
</feature>
<feature type="repeat" description="1-alpha" evidence="2">
    <location>
        <begin position="283"/>
        <end position="325"/>
    </location>
</feature>
<feature type="repeat" description="1-beta" evidence="2">
    <location>
        <begin position="326"/>
        <end position="366"/>
    </location>
</feature>
<feature type="repeat" description="1-gamma" evidence="2">
    <location>
        <begin position="369"/>
        <end position="401"/>
    </location>
</feature>
<feature type="domain" description="Ricin B-type lectin 2" evidence="4">
    <location>
        <begin position="403"/>
        <end position="527"/>
    </location>
</feature>
<feature type="repeat" description="2-alpha" evidence="2">
    <location>
        <begin position="414"/>
        <end position="449"/>
    </location>
</feature>
<feature type="repeat" description="2-beta" evidence="2">
    <location>
        <begin position="453"/>
        <end position="492"/>
    </location>
</feature>
<feature type="repeat" description="2-gamma" evidence="2">
    <location>
        <begin position="495"/>
        <end position="528"/>
    </location>
</feature>
<feature type="active site" evidence="1">
    <location>
        <position position="164"/>
    </location>
</feature>
<feature type="modified residue" description="Pyrrolidone carboxylic acid" evidence="2">
    <location>
        <position position="1"/>
    </location>
</feature>
<feature type="glycosylation site" description="N-linked (GlcNAc...) asparagine" evidence="3">
    <location>
        <position position="200"/>
    </location>
</feature>
<feature type="glycosylation site" description="N-linked (GlcNAc...) asparagine" evidence="3">
    <location>
        <position position="361"/>
    </location>
</feature>
<feature type="glycosylation site" description="N-linked (GlcNAc...) asparagine" evidence="3">
    <location>
        <position position="401"/>
    </location>
</feature>
<feature type="disulfide bond" description="Interchain (between A and B chains)" evidence="4">
    <location>
        <begin position="247"/>
        <end position="269"/>
    </location>
</feature>
<feature type="disulfide bond" evidence="2 4">
    <location>
        <begin position="286"/>
        <end position="305"/>
    </location>
</feature>
<feature type="disulfide bond" evidence="2 4">
    <location>
        <begin position="329"/>
        <end position="346"/>
    </location>
</feature>
<feature type="disulfide bond" evidence="2 4">
    <location>
        <begin position="417"/>
        <end position="430"/>
    </location>
</feature>
<feature type="disulfide bond" evidence="2 4">
    <location>
        <begin position="456"/>
        <end position="473"/>
    </location>
</feature>
<sequence length="528" mass="58870">QDQVIKFTTEGATSQSYKQFIEALRQRLTGGLIHDIPVLPDPTTVEERNRYITVELSNSERESIEVGIDVTNAYVVAYRAGSQSYFLRDAPASASTYLFPGTQRYSLRFDGSYGDLERWAHQTREEISLGLQALTHAISFLRSGASNDEEKARTLIVIIQMASEAARYRCISNRVGVSIRTGTAFQPDPAMLSLENNWDNLSGGVQQSVQDAFPNNVILSSINRQPVVVDSLSHPTVAVLALMLFVCNPPNANQSPLLIRSIVEESKICSSRYEPTVRIGGRDGMCVDVYDDGYHNGNRIIAWKCKDRLEENQLWTLKSDLTIRSNGKCLTTEGYAPGNYVMIYDCTSAVAEATYWEIWDNGTIINPKSALVLSAESSSMGGTLTVQTNEYLMRQGWRTGNNTSPFVTSISGYSDLCMQAQGSNVWLADCDNNKKEQQWALYTDGSIRSVQNTNNCLTSKDHKQGSPIVLMACSNGWASQRWLFKNDGSIYSLYDDMVMDVKGSDPSLKQIILWPYTGKPNQIWLTLF</sequence>
<organism>
    <name type="scientific">Abrus precatorius</name>
    <name type="common">Indian licorice</name>
    <name type="synonym">Glycine abrus</name>
    <dbReference type="NCBI Taxonomy" id="3816"/>
    <lineage>
        <taxon>Eukaryota</taxon>
        <taxon>Viridiplantae</taxon>
        <taxon>Streptophyta</taxon>
        <taxon>Embryophyta</taxon>
        <taxon>Tracheophyta</taxon>
        <taxon>Spermatophyta</taxon>
        <taxon>Magnoliopsida</taxon>
        <taxon>eudicotyledons</taxon>
        <taxon>Gunneridae</taxon>
        <taxon>Pentapetalae</taxon>
        <taxon>rosids</taxon>
        <taxon>fabids</taxon>
        <taxon>Fabales</taxon>
        <taxon>Fabaceae</taxon>
        <taxon>Papilionoideae</taxon>
        <taxon>50 kb inversion clade</taxon>
        <taxon>NPAAA clade</taxon>
        <taxon>indigoferoid/millettioid clade</taxon>
        <taxon>Abreae</taxon>
        <taxon>Abrus</taxon>
    </lineage>
</organism>
<reference evidence="8" key="1">
    <citation type="journal article" date="1993" name="J. Mol. Biol.">
        <title>Primary structure of three distinct isoabrins determined by cDNA sequencing. Conservation and significance.</title>
        <authorList>
            <person name="Hung C.-H."/>
            <person name="Lee M.-C."/>
            <person name="Lee T.-C."/>
            <person name="Lin J.-Y."/>
        </authorList>
    </citation>
    <scope>NUCLEOTIDE SEQUENCE [MRNA]</scope>
    <source>
        <tissue evidence="6">Endosperm</tissue>
    </source>
</reference>
<proteinExistence type="evidence at transcript level"/>
<dbReference type="EC" id="3.2.2.22"/>
<dbReference type="EMBL" id="M98346">
    <property type="protein sequence ID" value="AAA32626.1"/>
    <property type="molecule type" value="mRNA"/>
</dbReference>
<dbReference type="PIR" id="S32431">
    <property type="entry name" value="S32431"/>
</dbReference>
<dbReference type="SMR" id="Q06076"/>
<dbReference type="Proteomes" id="UP000694853">
    <property type="component" value="Unplaced"/>
</dbReference>
<dbReference type="GO" id="GO:0030246">
    <property type="term" value="F:carbohydrate binding"/>
    <property type="evidence" value="ECO:0007669"/>
    <property type="project" value="UniProtKB-KW"/>
</dbReference>
<dbReference type="GO" id="GO:0030598">
    <property type="term" value="F:rRNA N-glycosylase activity"/>
    <property type="evidence" value="ECO:0007669"/>
    <property type="project" value="UniProtKB-EC"/>
</dbReference>
<dbReference type="GO" id="GO:0090729">
    <property type="term" value="F:toxin activity"/>
    <property type="evidence" value="ECO:0007669"/>
    <property type="project" value="UniProtKB-KW"/>
</dbReference>
<dbReference type="GO" id="GO:0006952">
    <property type="term" value="P:defense response"/>
    <property type="evidence" value="ECO:0007669"/>
    <property type="project" value="UniProtKB-KW"/>
</dbReference>
<dbReference type="GO" id="GO:0017148">
    <property type="term" value="P:negative regulation of translation"/>
    <property type="evidence" value="ECO:0007669"/>
    <property type="project" value="UniProtKB-KW"/>
</dbReference>
<dbReference type="CDD" id="cd23484">
    <property type="entry name" value="beta-trefoil_Ricin_abrin-like_rpt1"/>
    <property type="match status" value="1"/>
</dbReference>
<dbReference type="CDD" id="cd23491">
    <property type="entry name" value="beta-trefoil_Ricin_abrin-like_rpt2"/>
    <property type="match status" value="1"/>
</dbReference>
<dbReference type="FunFam" id="2.80.10.50:FF:000076">
    <property type="entry name" value="Beta-galactoside-specific lectin 1"/>
    <property type="match status" value="1"/>
</dbReference>
<dbReference type="FunFam" id="2.80.10.50:FF:000079">
    <property type="entry name" value="Ricin"/>
    <property type="match status" value="1"/>
</dbReference>
<dbReference type="FunFam" id="3.40.420.10:FF:000001">
    <property type="entry name" value="Ricin"/>
    <property type="match status" value="1"/>
</dbReference>
<dbReference type="Gene3D" id="2.80.10.50">
    <property type="match status" value="2"/>
</dbReference>
<dbReference type="Gene3D" id="3.40.420.10">
    <property type="entry name" value="Ricin (A subunit), domain 1"/>
    <property type="match status" value="1"/>
</dbReference>
<dbReference type="Gene3D" id="4.10.470.10">
    <property type="entry name" value="Ricin (A Subunit), domain 2"/>
    <property type="match status" value="1"/>
</dbReference>
<dbReference type="InterPro" id="IPR036041">
    <property type="entry name" value="Ribosome-inact_prot_sf"/>
</dbReference>
<dbReference type="InterPro" id="IPR017989">
    <property type="entry name" value="Ribosome_inactivat_1/2"/>
</dbReference>
<dbReference type="InterPro" id="IPR001574">
    <property type="entry name" value="Ribosome_inactivat_prot"/>
</dbReference>
<dbReference type="InterPro" id="IPR017988">
    <property type="entry name" value="Ribosome_inactivat_prot_CS"/>
</dbReference>
<dbReference type="InterPro" id="IPR016138">
    <property type="entry name" value="Ribosome_inactivat_prot_sub1"/>
</dbReference>
<dbReference type="InterPro" id="IPR016139">
    <property type="entry name" value="Ribosome_inactivat_prot_sub2"/>
</dbReference>
<dbReference type="InterPro" id="IPR035992">
    <property type="entry name" value="Ricin_B-like_lectins"/>
</dbReference>
<dbReference type="InterPro" id="IPR000772">
    <property type="entry name" value="Ricin_B_lectin"/>
</dbReference>
<dbReference type="PANTHER" id="PTHR33453">
    <property type="match status" value="1"/>
</dbReference>
<dbReference type="PANTHER" id="PTHR33453:SF34">
    <property type="entry name" value="RIBOSOME-INACTIVATING PROTEIN"/>
    <property type="match status" value="1"/>
</dbReference>
<dbReference type="Pfam" id="PF00652">
    <property type="entry name" value="Ricin_B_lectin"/>
    <property type="match status" value="2"/>
</dbReference>
<dbReference type="Pfam" id="PF00161">
    <property type="entry name" value="RIP"/>
    <property type="match status" value="1"/>
</dbReference>
<dbReference type="PRINTS" id="PR00396">
    <property type="entry name" value="SHIGARICIN"/>
</dbReference>
<dbReference type="SMART" id="SM00458">
    <property type="entry name" value="RICIN"/>
    <property type="match status" value="2"/>
</dbReference>
<dbReference type="SUPFAM" id="SSF56371">
    <property type="entry name" value="Ribosome inactivating proteins (RIP)"/>
    <property type="match status" value="1"/>
</dbReference>
<dbReference type="SUPFAM" id="SSF50370">
    <property type="entry name" value="Ricin B-like lectins"/>
    <property type="match status" value="2"/>
</dbReference>
<dbReference type="PROSITE" id="PS50231">
    <property type="entry name" value="RICIN_B_LECTIN"/>
    <property type="match status" value="2"/>
</dbReference>
<dbReference type="PROSITE" id="PS00275">
    <property type="entry name" value="SHIGA_RICIN"/>
    <property type="match status" value="1"/>
</dbReference>
<protein>
    <recommendedName>
        <fullName>Abrin-d</fullName>
    </recommendedName>
    <component>
        <recommendedName>
            <fullName>Abrin-d A chain</fullName>
            <ecNumber>3.2.2.22</ecNumber>
        </recommendedName>
        <alternativeName>
            <fullName>rRNA N-glycosidase</fullName>
        </alternativeName>
    </component>
    <component>
        <recommendedName>
            <fullName>Linker peptide</fullName>
        </recommendedName>
    </component>
    <component>
        <recommendedName>
            <fullName>Abrin-d B chain</fullName>
        </recommendedName>
    </component>
</protein>
<evidence type="ECO:0000250" key="1">
    <source>
        <dbReference type="UniProtKB" id="P02879"/>
    </source>
</evidence>
<evidence type="ECO:0000250" key="2">
    <source>
        <dbReference type="UniProtKB" id="P11140"/>
    </source>
</evidence>
<evidence type="ECO:0000255" key="3"/>
<evidence type="ECO:0000255" key="4">
    <source>
        <dbReference type="PROSITE-ProRule" id="PRU00174"/>
    </source>
</evidence>
<evidence type="ECO:0000255" key="5">
    <source>
        <dbReference type="RuleBase" id="RU003711"/>
    </source>
</evidence>
<evidence type="ECO:0000269" key="6">
    <source>
    </source>
</evidence>
<evidence type="ECO:0000305" key="7"/>
<evidence type="ECO:0000312" key="8">
    <source>
        <dbReference type="EMBL" id="AAA32626.1"/>
    </source>
</evidence>